<organism>
    <name type="scientific">Methanosarcina acetivorans (strain ATCC 35395 / DSM 2834 / JCM 12185 / C2A)</name>
    <dbReference type="NCBI Taxonomy" id="188937"/>
    <lineage>
        <taxon>Archaea</taxon>
        <taxon>Methanobacteriati</taxon>
        <taxon>Methanobacteriota</taxon>
        <taxon>Stenosarchaea group</taxon>
        <taxon>Methanomicrobia</taxon>
        <taxon>Methanosarcinales</taxon>
        <taxon>Methanosarcinaceae</taxon>
        <taxon>Methanosarcina</taxon>
    </lineage>
</organism>
<protein>
    <recommendedName>
        <fullName>Dimethylamine methyltransferase MtbB2</fullName>
        <shortName>DMA methyltransferase 2</shortName>
        <shortName>DMAMT 2</shortName>
        <ecNumber>2.1.1.249</ecNumber>
    </recommendedName>
    <alternativeName>
        <fullName>Dimethylamine--corrinoid protein methyltransferase 2</fullName>
    </alternativeName>
</protein>
<proteinExistence type="inferred from homology"/>
<accession>Q8TS72</accession>
<reference key="1">
    <citation type="journal article" date="2002" name="Genome Res.">
        <title>The genome of Methanosarcina acetivorans reveals extensive metabolic and physiological diversity.</title>
        <authorList>
            <person name="Galagan J.E."/>
            <person name="Nusbaum C."/>
            <person name="Roy A."/>
            <person name="Endrizzi M.G."/>
            <person name="Macdonald P."/>
            <person name="FitzHugh W."/>
            <person name="Calvo S."/>
            <person name="Engels R."/>
            <person name="Smirnov S."/>
            <person name="Atnoor D."/>
            <person name="Brown A."/>
            <person name="Allen N."/>
            <person name="Naylor J."/>
            <person name="Stange-Thomann N."/>
            <person name="DeArellano K."/>
            <person name="Johnson R."/>
            <person name="Linton L."/>
            <person name="McEwan P."/>
            <person name="McKernan K."/>
            <person name="Talamas J."/>
            <person name="Tirrell A."/>
            <person name="Ye W."/>
            <person name="Zimmer A."/>
            <person name="Barber R.D."/>
            <person name="Cann I."/>
            <person name="Graham D.E."/>
            <person name="Grahame D.A."/>
            <person name="Guss A.M."/>
            <person name="Hedderich R."/>
            <person name="Ingram-Smith C."/>
            <person name="Kuettner H.C."/>
            <person name="Krzycki J.A."/>
            <person name="Leigh J.A."/>
            <person name="Li W."/>
            <person name="Liu J."/>
            <person name="Mukhopadhyay B."/>
            <person name="Reeve J.N."/>
            <person name="Smith K."/>
            <person name="Springer T.A."/>
            <person name="Umayam L.A."/>
            <person name="White O."/>
            <person name="White R.H."/>
            <person name="de Macario E.C."/>
            <person name="Ferry J.G."/>
            <person name="Jarrell K.F."/>
            <person name="Jing H."/>
            <person name="Macario A.J.L."/>
            <person name="Paulsen I.T."/>
            <person name="Pritchett M."/>
            <person name="Sowers K.R."/>
            <person name="Swanson R.V."/>
            <person name="Zinder S.H."/>
            <person name="Lander E."/>
            <person name="Metcalf W.W."/>
            <person name="Birren B."/>
        </authorList>
    </citation>
    <scope>NUCLEOTIDE SEQUENCE [LARGE SCALE GENOMIC DNA]</scope>
    <source>
        <strain>ATCC 35395 / DSM 2834 / JCM 12185 / C2A</strain>
    </source>
</reference>
<dbReference type="EC" id="2.1.1.249"/>
<dbReference type="EMBL" id="AE010299">
    <property type="protein sequence ID" value="AAM04366.1"/>
    <property type="molecule type" value="Genomic_DNA"/>
</dbReference>
<dbReference type="STRING" id="188937.MA_0933"/>
<dbReference type="KEGG" id="mac:MA_0933"/>
<dbReference type="HOGENOM" id="CLU_046512_0_0_2"/>
<dbReference type="InParanoid" id="Q8TS72"/>
<dbReference type="PhylomeDB" id="Q8TS72"/>
<dbReference type="UniPathway" id="UPA00644"/>
<dbReference type="Proteomes" id="UP000002487">
    <property type="component" value="Chromosome"/>
</dbReference>
<dbReference type="GO" id="GO:0043791">
    <property type="term" value="F:dimethylamine methyltransferase activity"/>
    <property type="evidence" value="ECO:0007669"/>
    <property type="project" value="UniProtKB-EC"/>
</dbReference>
<dbReference type="GO" id="GO:0015948">
    <property type="term" value="P:methanogenesis"/>
    <property type="evidence" value="ECO:0007669"/>
    <property type="project" value="UniProtKB-KW"/>
</dbReference>
<dbReference type="GO" id="GO:0032259">
    <property type="term" value="P:methylation"/>
    <property type="evidence" value="ECO:0007669"/>
    <property type="project" value="UniProtKB-KW"/>
</dbReference>
<dbReference type="InterPro" id="IPR012653">
    <property type="entry name" value="Dimeth_MeTrfase_MtbB"/>
</dbReference>
<dbReference type="NCBIfam" id="TIGR02368">
    <property type="entry name" value="dimeth_PyL"/>
    <property type="match status" value="1"/>
</dbReference>
<dbReference type="Pfam" id="PF09505">
    <property type="entry name" value="Dimeth_Pyl"/>
    <property type="match status" value="1"/>
</dbReference>
<comment type="function">
    <text evidence="1">Catalyzes the transfer of a methyl group from dimethylamine to the corrinoid cofactor of MtbC.</text>
</comment>
<comment type="catalytic activity">
    <reaction>
        <text>Co(I)-[dimethylamine-specific corrinoid protein] + dimethylamine + H(+) = methyl-Co(III)-[dimethylamine-specific corrinoid protein] + methylamine</text>
        <dbReference type="Rhea" id="RHEA:41175"/>
        <dbReference type="Rhea" id="RHEA-COMP:11122"/>
        <dbReference type="Rhea" id="RHEA-COMP:11123"/>
        <dbReference type="ChEBI" id="CHEBI:15378"/>
        <dbReference type="ChEBI" id="CHEBI:58040"/>
        <dbReference type="ChEBI" id="CHEBI:59338"/>
        <dbReference type="ChEBI" id="CHEBI:85033"/>
        <dbReference type="ChEBI" id="CHEBI:85035"/>
        <dbReference type="EC" id="2.1.1.249"/>
    </reaction>
</comment>
<comment type="pathway">
    <text>One-carbon metabolism; methanogenesis from dimethylamine.</text>
</comment>
<comment type="similarity">
    <text evidence="2">Belongs to the dimethylamine methyltransferase family.</text>
</comment>
<name>MTBB2_METAC</name>
<keyword id="KW-0484">Methanogenesis</keyword>
<keyword id="KW-0489">Methyltransferase</keyword>
<keyword id="KW-0669">Pyrrolysine</keyword>
<keyword id="KW-1185">Reference proteome</keyword>
<keyword id="KW-0808">Transferase</keyword>
<gene>
    <name type="primary">mtbB2</name>
    <name type="ordered locus">MA_0933</name>
</gene>
<feature type="chain" id="PRO_0000216564" description="Dimethylamine methyltransferase MtbB2">
    <location>
        <begin position="1"/>
        <end position="468"/>
    </location>
</feature>
<feature type="non-standard amino acid" description="Pyrrolysine" evidence="1">
    <location>
        <position position="356"/>
    </location>
</feature>
<evidence type="ECO:0000250" key="1"/>
<evidence type="ECO:0000305" key="2"/>
<sequence length="468" mass="50575">MATEYALRMGDGKRIFLTKEKIREELEAGAANAADLGEIPALSGDEIDRLAEILMMPGKAVSVEQGMEVPVTHDIGTIRLDGDQGNSGVGIPSSRLVGCMMHERAFGADTMELGHIDYSFKPVKPVVSNECQAMEVCQQNMIIPLFYGAMPNMGLYYTPDGPFENPGDLMKAFKIQEAWESMEHAADHLTRDTVWIMQKLFASGADGVNFDTTAAAGDGDFYGTLHAVEALRKEFPAMHIEVGMAGEMVLGMHGNLQYEGVTLAGLWPHQQASLVAKAGANVFGPVVNTNTSKTSPWNLARAVTFIKEAVKVSSLPCHVDMGMGVGGIPMLETPPIDAVTRASKAMVEVAGVDGIOIGVGDPLGMPISHIMASGMTGIRAAGDLVARMQFSKNMRIKEAKKYVAKKLDVDVMDLADEHVMRELREELDIGVITSVPGAAKGIAAKMNIEKLLDVRINSCELFRKQTGR</sequence>